<feature type="chain" id="PRO_0000308386" description="Polyprotein P1234">
    <location>
        <begin position="1"/>
        <end position="2494"/>
    </location>
</feature>
<feature type="chain" id="PRO_0000228760" description="Polyprotein P123'">
    <location>
        <begin position="1"/>
        <end position="1886"/>
    </location>
</feature>
<feature type="chain" id="PRO_0000228761" description="Polyprotein P123">
    <location>
        <begin position="1"/>
        <end position="1879"/>
    </location>
</feature>
<feature type="chain" id="PRO_0000228762" description="mRNA-capping enzyme nsP1">
    <location>
        <begin position="1"/>
        <end position="533"/>
    </location>
</feature>
<feature type="chain" id="PRO_0000228763" description="Protease nsP2">
    <location>
        <begin position="534"/>
        <end position="1327"/>
    </location>
</feature>
<feature type="chain" id="PRO_0000228764" description="Non-structural protein 3'">
    <location>
        <begin position="1328"/>
        <end position="1886"/>
    </location>
</feature>
<feature type="chain" id="PRO_0000228765" description="Non-structural protein 3">
    <location>
        <begin position="1328"/>
        <end position="1879"/>
    </location>
</feature>
<feature type="chain" id="PRO_0000228766" description="RNA-directed RNA polymerase nsP4">
    <location>
        <begin position="1887"/>
        <end position="2494"/>
    </location>
</feature>
<feature type="domain" description="Alphavirus-like MT" evidence="11">
    <location>
        <begin position="28"/>
        <end position="257"/>
    </location>
</feature>
<feature type="domain" description="(+)RNA virus helicase ATP-binding" evidence="10">
    <location>
        <begin position="674"/>
        <end position="839"/>
    </location>
</feature>
<feature type="domain" description="(+)RNA virus helicase C-terminal" evidence="10">
    <location>
        <begin position="840"/>
        <end position="988"/>
    </location>
</feature>
<feature type="domain" description="Peptidase C9" evidence="9">
    <location>
        <begin position="1001"/>
        <end position="1320"/>
    </location>
</feature>
<feature type="domain" description="Macro" evidence="7">
    <location>
        <begin position="1328"/>
        <end position="1486"/>
    </location>
</feature>
<feature type="domain" description="RdRp catalytic" evidence="8">
    <location>
        <begin position="2252"/>
        <end position="2367"/>
    </location>
</feature>
<feature type="region of interest" description="NsP1 membrane-binding" evidence="3">
    <location>
        <begin position="242"/>
        <end position="261"/>
    </location>
</feature>
<feature type="region of interest" description="Nucleolus localization signal" evidence="3">
    <location>
        <begin position="1002"/>
        <end position="1021"/>
    </location>
</feature>
<feature type="region of interest" description="Disordered" evidence="12">
    <location>
        <begin position="1667"/>
        <end position="1711"/>
    </location>
</feature>
<feature type="region of interest" description="Disordered" evidence="12">
    <location>
        <begin position="1764"/>
        <end position="1794"/>
    </location>
</feature>
<feature type="region of interest" description="Binding to host G3BP family members" evidence="13">
    <location>
        <begin position="1798"/>
        <end position="1810"/>
    </location>
</feature>
<feature type="region of interest" description="Binding to host FXR family members" evidence="13">
    <location>
        <begin position="1858"/>
        <end position="1874"/>
    </location>
</feature>
<feature type="short sequence motif" description="Nuclear export signal" evidence="4">
    <location>
        <begin position="1054"/>
        <end position="1063"/>
    </location>
</feature>
<feature type="short sequence motif" description="Nuclear localization signal" evidence="4">
    <location>
        <begin position="1177"/>
        <end position="1181"/>
    </location>
</feature>
<feature type="compositionally biased region" description="Pro residues" evidence="12">
    <location>
        <begin position="1671"/>
        <end position="1686"/>
    </location>
</feature>
<feature type="compositionally biased region" description="Polar residues" evidence="12">
    <location>
        <begin position="1687"/>
        <end position="1711"/>
    </location>
</feature>
<feature type="active site" description="For cysteine protease nsP2 activity" evidence="9">
    <location>
        <position position="1010"/>
    </location>
</feature>
<feature type="active site" description="For cysteine protease nsP2 activity" evidence="9">
    <location>
        <position position="1079"/>
    </location>
</feature>
<feature type="binding site" evidence="10">
    <location>
        <begin position="719"/>
        <end position="726"/>
    </location>
    <ligand>
        <name>a ribonucleoside 5'-triphosphate</name>
        <dbReference type="ChEBI" id="CHEBI:61557"/>
    </ligand>
</feature>
<feature type="binding site" evidence="5">
    <location>
        <position position="1337"/>
    </location>
    <ligand>
        <name>ADP-D-ribose</name>
        <dbReference type="ChEBI" id="CHEBI:57967"/>
    </ligand>
</feature>
<feature type="binding site" evidence="6">
    <location>
        <position position="1351"/>
    </location>
    <ligand>
        <name>ADP-D-ribose</name>
        <dbReference type="ChEBI" id="CHEBI:57967"/>
    </ligand>
</feature>
<feature type="binding site" evidence="6">
    <location>
        <position position="1359"/>
    </location>
    <ligand>
        <name>ADP-D-ribose</name>
        <dbReference type="ChEBI" id="CHEBI:57967"/>
    </ligand>
</feature>
<feature type="binding site" evidence="5">
    <location>
        <position position="1438"/>
    </location>
    <ligand>
        <name>ADP-D-ribose</name>
        <dbReference type="ChEBI" id="CHEBI:57967"/>
    </ligand>
</feature>
<feature type="binding site" evidence="5">
    <location>
        <position position="1439"/>
    </location>
    <ligand>
        <name>ADP-D-ribose</name>
        <dbReference type="ChEBI" id="CHEBI:57967"/>
    </ligand>
</feature>
<feature type="binding site" evidence="6">
    <location>
        <position position="1440"/>
    </location>
    <ligand>
        <name>ADP-D-ribose</name>
        <dbReference type="ChEBI" id="CHEBI:57967"/>
    </ligand>
</feature>
<feature type="binding site" evidence="2">
    <location>
        <position position="1589"/>
    </location>
    <ligand>
        <name>Zn(2+)</name>
        <dbReference type="ChEBI" id="CHEBI:29105"/>
    </ligand>
</feature>
<feature type="binding site" evidence="2">
    <location>
        <position position="1591"/>
    </location>
    <ligand>
        <name>Zn(2+)</name>
        <dbReference type="ChEBI" id="CHEBI:29105"/>
    </ligand>
</feature>
<feature type="binding site" evidence="2">
    <location>
        <position position="1614"/>
    </location>
    <ligand>
        <name>Zn(2+)</name>
        <dbReference type="ChEBI" id="CHEBI:29105"/>
    </ligand>
</feature>
<feature type="binding site" evidence="2">
    <location>
        <position position="1632"/>
    </location>
    <ligand>
        <name>Zn(2+)</name>
        <dbReference type="ChEBI" id="CHEBI:29105"/>
    </ligand>
</feature>
<feature type="site" description="Involved in the phosphoramide link with 7-methyl-GMP" evidence="4">
    <location>
        <position position="37"/>
    </location>
</feature>
<feature type="site" description="Cleavage; by protease nsP2" evidence="2">
    <location>
        <begin position="533"/>
        <end position="534"/>
    </location>
</feature>
<feature type="site" description="Cleavage; by protease nsP2" evidence="2">
    <location>
        <begin position="1327"/>
        <end position="1328"/>
    </location>
</feature>
<feature type="site" description="Cleavage; by protease nsP2" evidence="6">
    <location>
        <begin position="1886"/>
        <end position="1887"/>
    </location>
</feature>
<feature type="lipid moiety-binding region" description="S-palmitoyl cysteine; by host" evidence="6">
    <location>
        <position position="417"/>
    </location>
</feature>
<feature type="sequence variant" description="In strain: PE6.">
    <original>I</original>
    <variation>V</variation>
    <location>
        <position position="81"/>
    </location>
</feature>
<feature type="sequence variant" description="In strain: PE6.">
    <original>R</original>
    <variation>G</variation>
    <location>
        <position position="101"/>
    </location>
</feature>
<feature type="sequence variant" description="In strain: PE6.">
    <original>T</original>
    <variation>A</variation>
    <location>
        <position position="135"/>
    </location>
</feature>
<feature type="sequence variant" description="In strain: Georgia 97 and PE6.">
    <original>L</original>
    <variation>P</variation>
    <location>
        <position position="613"/>
    </location>
</feature>
<feature type="sequence variant" description="In strain: PE6.">
    <original>V</original>
    <variation>A</variation>
    <location>
        <position position="641"/>
    </location>
</feature>
<feature type="sequence variant" description="In strain: PE6.">
    <original>K</original>
    <variation>Q</variation>
    <location>
        <position position="730"/>
    </location>
</feature>
<feature type="sequence variant" description="In strain: PE6.">
    <original>M</original>
    <variation>T</variation>
    <location>
        <position position="1174"/>
    </location>
</feature>
<feature type="sequence variant" description="In strain: Georgia 97 and PE6.">
    <original>S</original>
    <variation>G</variation>
    <location>
        <position position="1358"/>
    </location>
</feature>
<feature type="sequence variant" description="In strain: Georgia 97.">
    <original>V</original>
    <variation>I</variation>
    <location>
        <position position="1391"/>
    </location>
</feature>
<feature type="sequence variant" description="In strain: Georgia 97.">
    <original>Q</original>
    <variation>H</variation>
    <location>
        <position position="1618"/>
    </location>
</feature>
<feature type="sequence variant" description="In strain: PE6.">
    <original>A</original>
    <variation>V</variation>
    <location>
        <position position="1774"/>
    </location>
</feature>
<feature type="sequence variant" description="In strain: PE6.">
    <original>G</original>
    <variation>A</variation>
    <location>
        <position position="1791"/>
    </location>
</feature>
<feature type="sequence variant" description="In strain: Georgia 97 and PE6.">
    <original>V</original>
    <variation>A</variation>
    <location>
        <position position="1864"/>
    </location>
</feature>
<protein>
    <recommendedName>
        <fullName>Polyprotein P1234</fullName>
        <shortName>P1234</shortName>
    </recommendedName>
    <alternativeName>
        <fullName>Non-structural polyprotein</fullName>
    </alternativeName>
    <component>
        <recommendedName>
            <fullName>Polyprotein P123'</fullName>
            <shortName>P123'</shortName>
        </recommendedName>
    </component>
    <component>
        <recommendedName>
            <fullName>Polyprotein P123</fullName>
            <shortName>P123</shortName>
        </recommendedName>
    </component>
    <component>
        <recommendedName>
            <fullName>mRNA-capping enzyme nsP1</fullName>
            <ecNumber evidence="5">2.1.1.-</ecNumber>
            <ecNumber evidence="5">2.7.7.-</ecNumber>
        </recommendedName>
        <alternativeName>
            <fullName>Non-structural protein 1</fullName>
        </alternativeName>
    </component>
    <component>
        <recommendedName>
            <fullName>Protease nsP2</fullName>
            <ecNumber evidence="4">3.4.22.-</ecNumber>
            <ecNumber evidence="6">3.6.1.15</ecNumber>
            <ecNumber evidence="3">3.6.1.74</ecNumber>
            <ecNumber evidence="6">3.6.4.13</ecNumber>
        </recommendedName>
        <alternativeName>
            <fullName>Non-structural protein 2</fullName>
            <shortName>nsP2</shortName>
        </alternativeName>
    </component>
    <component>
        <recommendedName>
            <fullName>Non-structural protein 3'</fullName>
            <shortName>nsP3'</shortName>
            <ecNumber evidence="4">3.1.3.84</ecNumber>
        </recommendedName>
    </component>
    <component>
        <recommendedName>
            <fullName>Non-structural protein 3</fullName>
            <shortName>nsP3</shortName>
            <ecNumber evidence="4">3.1.3.84</ecNumber>
        </recommendedName>
    </component>
    <component>
        <recommendedName>
            <fullName>RNA-directed RNA polymerase nsP4</fullName>
            <ecNumber evidence="2">2.7.7.19</ecNumber>
            <ecNumber evidence="8">2.7.7.48</ecNumber>
        </recommendedName>
        <alternativeName>
            <fullName>Non-structural protein 4</fullName>
            <shortName>nsP4</shortName>
        </alternativeName>
    </component>
</protein>
<evidence type="ECO:0000250" key="1">
    <source>
        <dbReference type="UniProtKB" id="O90368"/>
    </source>
</evidence>
<evidence type="ECO:0000250" key="2">
    <source>
        <dbReference type="UniProtKB" id="P03317"/>
    </source>
</evidence>
<evidence type="ECO:0000250" key="3">
    <source>
        <dbReference type="UniProtKB" id="P08411"/>
    </source>
</evidence>
<evidence type="ECO:0000250" key="4">
    <source>
        <dbReference type="UniProtKB" id="P27282"/>
    </source>
</evidence>
<evidence type="ECO:0000250" key="5">
    <source>
        <dbReference type="UniProtKB" id="P36328"/>
    </source>
</evidence>
<evidence type="ECO:0000250" key="6">
    <source>
        <dbReference type="UniProtKB" id="Q8JUX6"/>
    </source>
</evidence>
<evidence type="ECO:0000255" key="7">
    <source>
        <dbReference type="PROSITE-ProRule" id="PRU00490"/>
    </source>
</evidence>
<evidence type="ECO:0000255" key="8">
    <source>
        <dbReference type="PROSITE-ProRule" id="PRU00539"/>
    </source>
</evidence>
<evidence type="ECO:0000255" key="9">
    <source>
        <dbReference type="PROSITE-ProRule" id="PRU00853"/>
    </source>
</evidence>
<evidence type="ECO:0000255" key="10">
    <source>
        <dbReference type="PROSITE-ProRule" id="PRU00990"/>
    </source>
</evidence>
<evidence type="ECO:0000255" key="11">
    <source>
        <dbReference type="PROSITE-ProRule" id="PRU01079"/>
    </source>
</evidence>
<evidence type="ECO:0000256" key="12">
    <source>
        <dbReference type="SAM" id="MobiDB-lite"/>
    </source>
</evidence>
<evidence type="ECO:0000269" key="13">
    <source>
    </source>
</evidence>
<evidence type="ECO:0000305" key="14"/>
<evidence type="ECO:0000305" key="15">
    <source>
    </source>
</evidence>
<accession>Q4QXJ8</accession>
<accession>Q4QXK0</accession>
<accession>Q5XZF4</accession>
<sequence length="2494" mass="277312">MEKVHVDLDADSPFVKSLQRCFPHFEIEATQVTDNDHANARAFSHLATKLIEGEVDTDQVILDIGSAPVRHTHSKHKYHCICPMKSAEDPDRLYRYADKLRKSDVTDKCIASKAADLLTVMSTPDAETPSLCMHTDSTCRYHGSVAVYQDVYAVHAPTSIYYQALKGVRTIYWIGFDTTPFMYKNMAGAYPTYNTNWADESVLEARNIGLGSSDLHEKSFGKVSIMRKKKLQPTNKVIFSVGSTIYTEERILLRSWHLPNVFHLKGKTSFTGRCNTIVSCEGYVVKKITLSPGIYGKVDNLASTMHREGFLSCKVTDTLRGERVSFPVCTYVPATLCDQMTGILATDVSVDDAQKLLVGLNQRIVVNGRTQRNTNTMQNYLLPVVAQAFSRWAREHRADLEDEKGLGVRERSLVMGCCWAFKTHKITSIYKRPGTQTIKKVPAVFNSFVIPQPTSYGLDIGLRRRIKMLFDAKKAPAPIITEADVAHLKGLQDEAEAVAEAEAVRAALPPLLPEVDKETVEADIDLIMQEAGAGSVETPRRHIKVTTYPGEEMIGSYAVLSPQAVLNSEKLACIHPLAEQVLVMTHKGRAGRYKVEPYHGRVIVPSGTAIPILDFQALSESATIVFNEREFVNRYLHHIAVNGGALNTDEEYYKVVKSTETDSEYVFDIDAKKCVKKGDAGPMCLVGELVDPPFHEFAYESLKTRPAAPHKVPTIGVYGVPGSGKSGIIKSAVTKRDLVVSAKKENCMEIIKDVKRMRGMDIAARTVDSVLLNGVKHSVDTLYIDEAFACHAGTLLALIAIVKPKKVVLCGDPKQCGFFNMMCLKVHFNHEICTEVYHKSISRRCTKTVTSIVSTLFYDKRMRTVNPCNDKIIIDTTSTTKPLKDDIILTCFRGWVKQLQIDYKNHEIMTAAASQGLTRKGVYAVRYKVNENPLYAQTSEHVNVLLTRTEKRIVWKTLAGDPWIKTLTASYPGNFTATLEEWQAEHDAIMAKILETPASSDVFQNKVNVCWAKALEPVLATANITLTRSQWETIPAFKDDKAYSPEMALNFFCTRFFGVDIDSGLFSAPTVPLTYTNEHWDNSPGPNMYGLCMRTAKELARRYPCILKAVDTGRVADVRTDTIKDYNPLINVVPLNRRLPHSLVVTHRYTGNGDYSQLVTKMTGKTVLVVGTPMNIPGKRVETLGPSPQCTYKAELDLGIPAALGKYDIIFINVRTPYRHHHYQQCEDHAIHHSMLTRKAVDHLNKGGTCIALGYGTADRATENIISAVARSFRFSRVCQPKCAWENTEVAFVFFGKDNGNHLQDQDRLSVVLNNIYQGSTQHEAGRAPAYRVVRGDITKSNDEVIVNAANNKGQPGSGVCGALYRKWPGAFDKQPVATGKAHLVKHSPNVIHAVGPNFSRLSENEGDQKLSEVYMDIARIINNERFTKVSIPLLSTGIYAGGKDRVMQSLNHLFTAMDTTDADITIYCLDKQWESRIKEAITRKESVEELTEDDRPVDIELVRVHPLSSLAGRPGYSTTEGKVYSYLEGTRFHQTAKDIAEIYAMWPNKQEANEQICLYVLGESMNSIRSKCPVEESEASSPPHTIPCLCNYAMTAERVYRLRMAKNEQFAVCSSFQLPKYRITGVQKIQCSKPVIFSGTVPPAIHPRKFASVTVEDTPVVQPERLVPRRPAPPVPVPARIPSPPCTSTNGSTTSIQSLGEDQSASASSGAEISVDQVSLWSIPSATGFDVRTSSSLSLEQPTFPTMVVEAEIHASQGSLWSIPSITGSETRAPSPPSQDSRPSTPSASGSHTSVDLITFDSVAEILEDFSRSPFQFLSEIKPIPAPRTRVNNMSRSADTIKPIPKPRKCQVKYTQPPGVARVISAAEFDEFVRRHSNXRYEAGAYIFSSETGQGHLQQKSTRQCKLQYPILERSVHEKFYAPRLDLEREKLLQKKLQLCASEGNRSRYQSRKVENMKAITVERLLQGIGSYLSAEPQPVECYKVTYPAPMYSSTASNSFSSAEVAVKVCNLVLQENFPTVASYNITDEYDAYLDMVDGASCCLDTATFCPAKLRSFPKKHSYLRPEIRSAVPSPIQNTLQNVLAAATKRNCNVTQMRELPVLDSAAFNVECFKKYACNDEYWDFYKTNPIRLTAENVTQYVTKLKGPKAAALFAKTHNLQPLHEIPMDRFVMDLKRDVKVTPGTKHTEERPKVQVIQAADPLATAYLCGIHRELVRRLNAVLLPNIHTLFDMSAEDFDAIIAEHFQFGDAVLETDIASFDKSEDDAIAMSALMILEDLGVDQALLNLIEAAFGNITSVHLPTGTRFKFGAMMKSGMFLTLFINTVVNIMIASRVLRERLTTSPCAAFIGDDNIVKGVTSDALMAERCATWLNMEVKIIDAVVGVKAPYFCGGFIVVDQITGTACRVADPLKRLFKLGKPLPLDDDQDVDRRRALHDEAARWNRIGITEELVKAVESRYEVNYVSLIITALTTLASSVSNFKHIRGHPITLYG</sequence>
<name>POLN_EEEVF</name>
<dbReference type="EC" id="2.1.1.-" evidence="5"/>
<dbReference type="EC" id="2.7.7.-" evidence="5"/>
<dbReference type="EC" id="3.4.22.-" evidence="4"/>
<dbReference type="EC" id="3.6.1.15" evidence="6"/>
<dbReference type="EC" id="3.6.1.74" evidence="3"/>
<dbReference type="EC" id="3.6.4.13" evidence="6"/>
<dbReference type="EC" id="3.1.3.84" evidence="4"/>
<dbReference type="EC" id="2.7.7.19" evidence="2"/>
<dbReference type="EC" id="2.7.7.48" evidence="8"/>
<dbReference type="EMBL" id="AY705241">
    <property type="protein sequence ID" value="AAT96379.1"/>
    <property type="molecule type" value="Genomic_RNA"/>
</dbReference>
<dbReference type="EMBL" id="AY705240">
    <property type="protein sequence ID" value="AAT96377.1"/>
    <property type="molecule type" value="Genomic_RNA"/>
</dbReference>
<dbReference type="EMBL" id="AY722102">
    <property type="protein sequence ID" value="AAU95734.1"/>
    <property type="molecule type" value="Genomic_RNA"/>
</dbReference>
<dbReference type="MEROPS" id="C09.002"/>
<dbReference type="Proteomes" id="UP000008298">
    <property type="component" value="Genome"/>
</dbReference>
<dbReference type="Proteomes" id="UP000110644">
    <property type="component" value="Genome"/>
</dbReference>
<dbReference type="Proteomes" id="UP000170335">
    <property type="component" value="Genome"/>
</dbReference>
<dbReference type="GO" id="GO:0044162">
    <property type="term" value="C:host cell cytoplasmic vesicle membrane"/>
    <property type="evidence" value="ECO:0007669"/>
    <property type="project" value="UniProtKB-SubCell"/>
</dbReference>
<dbReference type="GO" id="GO:0044176">
    <property type="term" value="C:host cell filopodium"/>
    <property type="evidence" value="ECO:0007669"/>
    <property type="project" value="UniProtKB-SubCell"/>
</dbReference>
<dbReference type="GO" id="GO:0042025">
    <property type="term" value="C:host cell nucleus"/>
    <property type="evidence" value="ECO:0007669"/>
    <property type="project" value="UniProtKB-SubCell"/>
</dbReference>
<dbReference type="GO" id="GO:0020002">
    <property type="term" value="C:host cell plasma membrane"/>
    <property type="evidence" value="ECO:0007669"/>
    <property type="project" value="UniProtKB-SubCell"/>
</dbReference>
<dbReference type="GO" id="GO:0016020">
    <property type="term" value="C:membrane"/>
    <property type="evidence" value="ECO:0007669"/>
    <property type="project" value="UniProtKB-KW"/>
</dbReference>
<dbReference type="GO" id="GO:0005524">
    <property type="term" value="F:ATP binding"/>
    <property type="evidence" value="ECO:0007669"/>
    <property type="project" value="UniProtKB-KW"/>
</dbReference>
<dbReference type="GO" id="GO:0016887">
    <property type="term" value="F:ATP hydrolysis activity"/>
    <property type="evidence" value="ECO:0007669"/>
    <property type="project" value="RHEA"/>
</dbReference>
<dbReference type="GO" id="GO:0008234">
    <property type="term" value="F:cysteine-type peptidase activity"/>
    <property type="evidence" value="ECO:0007669"/>
    <property type="project" value="UniProtKB-KW"/>
</dbReference>
<dbReference type="GO" id="GO:0005525">
    <property type="term" value="F:GTP binding"/>
    <property type="evidence" value="ECO:0007669"/>
    <property type="project" value="UniProtKB-KW"/>
</dbReference>
<dbReference type="GO" id="GO:0046872">
    <property type="term" value="F:metal ion binding"/>
    <property type="evidence" value="ECO:0007669"/>
    <property type="project" value="UniProtKB-KW"/>
</dbReference>
<dbReference type="GO" id="GO:0140818">
    <property type="term" value="F:mRNA 5'-triphosphate monophosphatase activity"/>
    <property type="evidence" value="ECO:0007669"/>
    <property type="project" value="RHEA"/>
</dbReference>
<dbReference type="GO" id="GO:0008174">
    <property type="term" value="F:mRNA methyltransferase activity"/>
    <property type="evidence" value="ECO:0007669"/>
    <property type="project" value="InterPro"/>
</dbReference>
<dbReference type="GO" id="GO:1990817">
    <property type="term" value="F:poly(A) RNA polymerase activity"/>
    <property type="evidence" value="ECO:0007669"/>
    <property type="project" value="UniProtKB-EC"/>
</dbReference>
<dbReference type="GO" id="GO:0004651">
    <property type="term" value="F:polynucleotide 5'-phosphatase activity"/>
    <property type="evidence" value="ECO:0007669"/>
    <property type="project" value="UniProtKB-EC"/>
</dbReference>
<dbReference type="GO" id="GO:0003723">
    <property type="term" value="F:RNA binding"/>
    <property type="evidence" value="ECO:0007669"/>
    <property type="project" value="UniProtKB-KW"/>
</dbReference>
<dbReference type="GO" id="GO:0003724">
    <property type="term" value="F:RNA helicase activity"/>
    <property type="evidence" value="ECO:0007669"/>
    <property type="project" value="UniProtKB-EC"/>
</dbReference>
<dbReference type="GO" id="GO:0003968">
    <property type="term" value="F:RNA-directed RNA polymerase activity"/>
    <property type="evidence" value="ECO:0007669"/>
    <property type="project" value="UniProtKB-KW"/>
</dbReference>
<dbReference type="GO" id="GO:0006370">
    <property type="term" value="P:7-methylguanosine mRNA capping"/>
    <property type="evidence" value="ECO:0007669"/>
    <property type="project" value="UniProtKB-KW"/>
</dbReference>
<dbReference type="GO" id="GO:0006351">
    <property type="term" value="P:DNA-templated transcription"/>
    <property type="evidence" value="ECO:0007669"/>
    <property type="project" value="InterPro"/>
</dbReference>
<dbReference type="GO" id="GO:0032259">
    <property type="term" value="P:methylation"/>
    <property type="evidence" value="ECO:0007669"/>
    <property type="project" value="UniProtKB-KW"/>
</dbReference>
<dbReference type="GO" id="GO:0016556">
    <property type="term" value="P:mRNA modification"/>
    <property type="evidence" value="ECO:0007669"/>
    <property type="project" value="InterPro"/>
</dbReference>
<dbReference type="GO" id="GO:0006508">
    <property type="term" value="P:proteolysis"/>
    <property type="evidence" value="ECO:0007669"/>
    <property type="project" value="UniProtKB-KW"/>
</dbReference>
<dbReference type="GO" id="GO:0039657">
    <property type="term" value="P:symbiont-mediated suppression of host gene expression"/>
    <property type="evidence" value="ECO:0007669"/>
    <property type="project" value="UniProtKB-KW"/>
</dbReference>
<dbReference type="GO" id="GO:0039523">
    <property type="term" value="P:symbiont-mediated suppression of host mRNA transcription via inhibition of RNA polymerase II activity"/>
    <property type="evidence" value="ECO:0007669"/>
    <property type="project" value="UniProtKB-KW"/>
</dbReference>
<dbReference type="GO" id="GO:0039694">
    <property type="term" value="P:viral RNA genome replication"/>
    <property type="evidence" value="ECO:0007669"/>
    <property type="project" value="InterPro"/>
</dbReference>
<dbReference type="CDD" id="cd21557">
    <property type="entry name" value="Macro_X_Nsp3-like"/>
    <property type="match status" value="1"/>
</dbReference>
<dbReference type="CDD" id="cd23250">
    <property type="entry name" value="Togaviridae_RdRp"/>
    <property type="match status" value="1"/>
</dbReference>
<dbReference type="FunFam" id="3.40.220.10:FF:000015">
    <property type="entry name" value="Polyprotein P1234"/>
    <property type="match status" value="1"/>
</dbReference>
<dbReference type="FunFam" id="3.40.50.300:FF:001415">
    <property type="entry name" value="Polyprotein P1234"/>
    <property type="match status" value="1"/>
</dbReference>
<dbReference type="Gene3D" id="3.90.70.110">
    <property type="entry name" value="Alphavirus nsP2 protease domain"/>
    <property type="match status" value="1"/>
</dbReference>
<dbReference type="Gene3D" id="3.40.220.10">
    <property type="entry name" value="Leucine Aminopeptidase, subunit E, domain 1"/>
    <property type="match status" value="1"/>
</dbReference>
<dbReference type="Gene3D" id="3.40.50.300">
    <property type="entry name" value="P-loop containing nucleotide triphosphate hydrolases"/>
    <property type="match status" value="2"/>
</dbReference>
<dbReference type="Gene3D" id="3.40.50.150">
    <property type="entry name" value="Vaccinia Virus protein VP39"/>
    <property type="match status" value="1"/>
</dbReference>
<dbReference type="InterPro" id="IPR027351">
    <property type="entry name" value="(+)RNA_virus_helicase_core_dom"/>
</dbReference>
<dbReference type="InterPro" id="IPR002588">
    <property type="entry name" value="Alphavirus-like_MT_dom"/>
</dbReference>
<dbReference type="InterPro" id="IPR002620">
    <property type="entry name" value="Alphavirus_nsp2pro"/>
</dbReference>
<dbReference type="InterPro" id="IPR044936">
    <property type="entry name" value="Alphavirus_nsp2pro_sf"/>
</dbReference>
<dbReference type="InterPro" id="IPR043502">
    <property type="entry name" value="DNA/RNA_pol_sf"/>
</dbReference>
<dbReference type="InterPro" id="IPR002589">
    <property type="entry name" value="Macro_dom"/>
</dbReference>
<dbReference type="InterPro" id="IPR043472">
    <property type="entry name" value="Macro_dom-like"/>
</dbReference>
<dbReference type="InterPro" id="IPR044371">
    <property type="entry name" value="Macro_X_NSP3-like"/>
</dbReference>
<dbReference type="InterPro" id="IPR048891">
    <property type="entry name" value="nsP3_ZBD"/>
</dbReference>
<dbReference type="InterPro" id="IPR027417">
    <property type="entry name" value="P-loop_NTPase"/>
</dbReference>
<dbReference type="InterPro" id="IPR001788">
    <property type="entry name" value="RNA-dep_RNA_pol_alsuvir"/>
</dbReference>
<dbReference type="InterPro" id="IPR007094">
    <property type="entry name" value="RNA-dir_pol_PSvirus"/>
</dbReference>
<dbReference type="InterPro" id="IPR029063">
    <property type="entry name" value="SAM-dependent_MTases_sf"/>
</dbReference>
<dbReference type="InterPro" id="IPR047311">
    <property type="entry name" value="Togaviridae_RdRp"/>
</dbReference>
<dbReference type="InterPro" id="IPR049329">
    <property type="entry name" value="ToMV_Hel_N"/>
</dbReference>
<dbReference type="Pfam" id="PF01661">
    <property type="entry name" value="Macro"/>
    <property type="match status" value="1"/>
</dbReference>
<dbReference type="Pfam" id="PF20852">
    <property type="entry name" value="nsP3_ZBD"/>
    <property type="match status" value="1"/>
</dbReference>
<dbReference type="Pfam" id="PF01707">
    <property type="entry name" value="Peptidase_C9"/>
    <property type="match status" value="1"/>
</dbReference>
<dbReference type="Pfam" id="PF00978">
    <property type="entry name" value="RdRP_2"/>
    <property type="match status" value="1"/>
</dbReference>
<dbReference type="Pfam" id="PF20896">
    <property type="entry name" value="ToMV_Hel_N"/>
    <property type="match status" value="1"/>
</dbReference>
<dbReference type="Pfam" id="PF01443">
    <property type="entry name" value="Viral_helicase1"/>
    <property type="match status" value="1"/>
</dbReference>
<dbReference type="Pfam" id="PF01660">
    <property type="entry name" value="Vmethyltransf"/>
    <property type="match status" value="1"/>
</dbReference>
<dbReference type="SMART" id="SM00506">
    <property type="entry name" value="A1pp"/>
    <property type="match status" value="1"/>
</dbReference>
<dbReference type="SUPFAM" id="SSF56672">
    <property type="entry name" value="DNA/RNA polymerases"/>
    <property type="match status" value="1"/>
</dbReference>
<dbReference type="SUPFAM" id="SSF52949">
    <property type="entry name" value="Macro domain-like"/>
    <property type="match status" value="1"/>
</dbReference>
<dbReference type="SUPFAM" id="SSF52540">
    <property type="entry name" value="P-loop containing nucleoside triphosphate hydrolases"/>
    <property type="match status" value="1"/>
</dbReference>
<dbReference type="PROSITE" id="PS51743">
    <property type="entry name" value="ALPHAVIRUS_MT"/>
    <property type="match status" value="1"/>
</dbReference>
<dbReference type="PROSITE" id="PS51154">
    <property type="entry name" value="MACRO"/>
    <property type="match status" value="1"/>
</dbReference>
<dbReference type="PROSITE" id="PS51520">
    <property type="entry name" value="NSP2PRO"/>
    <property type="match status" value="1"/>
</dbReference>
<dbReference type="PROSITE" id="PS51657">
    <property type="entry name" value="PSRV_HELICASE"/>
    <property type="match status" value="1"/>
</dbReference>
<dbReference type="PROSITE" id="PS50507">
    <property type="entry name" value="RDRP_SSRNA_POS"/>
    <property type="match status" value="1"/>
</dbReference>
<organismHost>
    <name type="scientific">Aedes</name>
    <dbReference type="NCBI Taxonomy" id="7158"/>
</organismHost>
<organismHost>
    <name type="scientific">Homo sapiens</name>
    <name type="common">Human</name>
    <dbReference type="NCBI Taxonomy" id="9606"/>
</organismHost>
<organismHost>
    <name type="scientific">Passeriformes</name>
    <dbReference type="NCBI Taxonomy" id="9126"/>
</organismHost>
<reference key="1">
    <citation type="journal article" date="2005" name="DNA Seq.">
        <title>Comparative sequence analysis of the eastern equine encephalitis virus pathogenic strains FL91-4679 and GA97 to other North American strains.</title>
        <authorList>
            <person name="Platteborze P.L."/>
            <person name="Kondig J.P."/>
            <person name="Schoepp R.J."/>
            <person name="Wasieloski L.P."/>
        </authorList>
    </citation>
    <scope>NUCLEOTIDE SEQUENCE [GENOMIC RNA]</scope>
    <source>
        <strain>Florida91-469</strain>
        <strain>Georgia 97</strain>
        <strain>PE6</strain>
    </source>
</reference>
<reference key="2">
    <citation type="journal article" date="2017" name="J. Virol.">
        <title>Hypervariable Domain of Eastern Equine Encephalitis Virus nsP3 Redundantly Utilizes Multiple Cellular Proteins for Replication Complex Assembly.</title>
        <authorList>
            <person name="Frolov I."/>
            <person name="Kim D.Y."/>
            <person name="Akhrymuk M."/>
            <person name="Mobley J.A."/>
            <person name="Frolova E.I."/>
        </authorList>
    </citation>
    <scope>FUNCTION (NON-STRUCTURAL PROTEIN 3)</scope>
    <scope>DOMAIN (NON-STRUCTURAL PROTEIN 3)</scope>
    <scope>INTERACTION WITH HOST FXR1 (NON-STRUCTURAL PROTEIN 3)</scope>
    <scope>INTERACTION WITH HOST FXR2 (NON-STRUCTURAL PROTEIN 3)</scope>
    <scope>INTERACTION WITH HOST FMR1 (NON-STRUCTURAL PROTEIN 3)</scope>
    <scope>INTERACTION WITH HOST G3BP1 (NON-STRUCTURAL PROTEIN 3)</scope>
    <scope>INTERACTION WITH HOST G3BP2 (NON-STRUCTURAL PROTEIN 3)</scope>
    <source>
        <strain>Florida93</strain>
    </source>
</reference>
<keyword id="KW-0067">ATP-binding</keyword>
<keyword id="KW-1262">Eukaryotic host gene expression shutoff by virus</keyword>
<keyword id="KW-1191">Eukaryotic host transcription shutoff by virus</keyword>
<keyword id="KW-0342">GTP-binding</keyword>
<keyword id="KW-0347">Helicase</keyword>
<keyword id="KW-1032">Host cell membrane</keyword>
<keyword id="KW-1034">Host cell projection</keyword>
<keyword id="KW-1035">Host cytoplasm</keyword>
<keyword id="KW-1036">Host cytoplasmic vesicle</keyword>
<keyword id="KW-1190">Host gene expression shutoff by virus</keyword>
<keyword id="KW-1043">Host membrane</keyword>
<keyword id="KW-1048">Host nucleus</keyword>
<keyword id="KW-0945">Host-virus interaction</keyword>
<keyword id="KW-0378">Hydrolase</keyword>
<keyword id="KW-1104">Inhibition of host RNA polymerase II by virus</keyword>
<keyword id="KW-0449">Lipoprotein</keyword>
<keyword id="KW-0472">Membrane</keyword>
<keyword id="KW-0479">Metal-binding</keyword>
<keyword id="KW-0489">Methyltransferase</keyword>
<keyword id="KW-0506">mRNA capping</keyword>
<keyword id="KW-0507">mRNA processing</keyword>
<keyword id="KW-0511">Multifunctional enzyme</keyword>
<keyword id="KW-0547">Nucleotide-binding</keyword>
<keyword id="KW-0548">Nucleotidyltransferase</keyword>
<keyword id="KW-0564">Palmitate</keyword>
<keyword id="KW-0597">Phosphoprotein</keyword>
<keyword id="KW-0645">Protease</keyword>
<keyword id="KW-1159">RNA suppression of termination</keyword>
<keyword id="KW-0694">RNA-binding</keyword>
<keyword id="KW-0696">RNA-directed RNA polymerase</keyword>
<keyword id="KW-0949">S-adenosyl-L-methionine</keyword>
<keyword id="KW-0788">Thiol protease</keyword>
<keyword id="KW-0808">Transferase</keyword>
<keyword id="KW-0832">Ubl conjugation</keyword>
<keyword id="KW-0693">Viral RNA replication</keyword>
<keyword id="KW-0862">Zinc</keyword>
<organism>
    <name type="scientific">Eastern equine encephalitis virus (strain Florida 91-469)</name>
    <name type="common">EEEV</name>
    <name type="synonym">Eastern equine encephalomyelitis virus</name>
    <dbReference type="NCBI Taxonomy" id="374598"/>
    <lineage>
        <taxon>Viruses</taxon>
        <taxon>Riboviria</taxon>
        <taxon>Orthornavirae</taxon>
        <taxon>Kitrinoviricota</taxon>
        <taxon>Alsuviricetes</taxon>
        <taxon>Martellivirales</taxon>
        <taxon>Togaviridae</taxon>
        <taxon>Alphavirus</taxon>
        <taxon>Eastern equine encephalitis virus</taxon>
    </lineage>
</organism>
<comment type="function">
    <molecule>Polyprotein P1234</molecule>
    <text evidence="6">Inactive precursor of the viral replicase, which is activated by cleavages carried out by the viral protease nsP2.</text>
</comment>
<comment type="function">
    <molecule>Polyprotein P123</molecule>
    <text evidence="2 14">The early replication complex formed by the polyprotein P123 and nsP4 synthesizes the minus-strand RNAs (antigenome) (By similarity). Polyprotein P123 is a short-lived polyprotein that accumulates during early stage of infection (Probable). As soon P123 is cleaved into mature proteins, the plus-strand RNAs synthesis begins (By similarity).</text>
</comment>
<comment type="function">
    <molecule>Polyprotein P123'</molecule>
    <text evidence="14">The early replication complex formed by the polyprotein P123' and nsP4 synthesizes minus-strand RNAs (antigenome) (Probable). Polyprotein P123' is a short-lived polyprotein that accumulates during early stage of infection (Probable). As soon P123' is cleaved into mature proteins, the plus-strand RNAs synthesis begins (Probable).</text>
</comment>
<comment type="function">
    <molecule>mRNA-capping enzyme nsP1</molecule>
    <text evidence="2 3 4 6 14">Cytoplasmic capping enzyme that catalyzes two virus-specific reactions: methyltransferase and nsP1 guanylyltransferase (By similarity). mRNA-capping is necessary since all viral RNAs are synthesized in the cytoplasm, and host capping enzymes are restricted to the nucleus (Probable). The enzymatic reaction involves a covalent link between 7-methyl-GMP and nsP1, whereas eukaryotic capping enzymes form a covalent complex only with GMP (Probable). NsP1 capping consists in the following reactions: GTP is first methylated into 7-methyl-GMP and then is covalently linked to nsP1 to form the m7GMp-nsP1 complex from which 7-methyl-GMP complex is transferred to the mRNA to create the cap structure (By similarity). NsP1 is also needed for the initiation of the minus-strand RNAs synthesis (By similarity). Probably serves as a membrane anchor for the replication complex composed of nsP1-nsP4 (By similarity). Nsp1 is needed for the initiation of the minus-strand RNAs synthesis (By similarity). Palmitoylated nsP1 is remodeling host cell cytoskeleton, and induces filopodium-like structure formation at the surface of the host cell (By similarity).</text>
</comment>
<comment type="function">
    <molecule>Protease nsP2</molecule>
    <text evidence="2 3 4 6">Multifunctional protein whose N-terminus is part of the RNA polymerase complex and displays NTPase, RNA triphosphatase and helicase activities (By similarity). NTPase and RNA triphosphatase are involved in viral RNA capping and helicase keeps a check on the dsRNA replication intermediates (By similarity). The C-terminus harbors a protease that specifically cleaves the polyproteins and releases the mature proteins (By similarity). Required for the shutoff of minus-strand RNAs synthesis (By similarity). Inhibits host translation to ensure maximal viral gene expression and evade host immune response (By similarity).</text>
</comment>
<comment type="function">
    <molecule>Non-structural protein 3</molecule>
    <text evidence="2 4 13 15">Seems to be essential for minus-strand RNAs and subgenomic 26S mRNAs synthesis (By similarity). Displays mono-ADP-ribosylhydrolase activity (By similarity). ADP-ribosylation is a post-translational modification that controls various processes of the host cell and the virus probably needs to revert it for optimal viral replication (By similarity). Binds proteins of FXR and G3BP families and sequesters them into the viral RNA replication complexes thereby inhibiting the formation of host stress granules on viral mRNAs (PubMed:28468889). The nsp3-FXR and nsp3-G3BP complexes bind viral RNAs and probably orchestrate the assembly of viral replication complexes, thanks to the ability of G3BP and FXR family members to self-assemble and bind DNA (Probable).</text>
</comment>
<comment type="function">
    <molecule>Non-structural protein 3'</molecule>
    <text evidence="2 14">Seems to be essential for minus-strand RNAs and subgenomic 26S mRNAs synthesis (By similarity). Displays mono-ADP-ribosylhydrolase activity (Probable). ADP-ribosylation is a post-translational modification that controls various processes of the host cell and the virus probably needs to revert it for optimal viral replication (Probable). Binds proteins of FXR family and sequesters them into the viral RNA replication complexes thereby inhibiting the formation of host stress granules on viral mRNAs (Probable). The nsp3'-FXR complexes bind viral RNAs and probably orchestrate the assembly of viral replication complexes, thanks to the ability of FXR family members to self-assemble and bind DNA (Probable).</text>
</comment>
<comment type="function">
    <molecule>RNA-directed RNA polymerase nsP4</molecule>
    <text evidence="2">RNA dependent RNA polymerase (By similarity). Replicates genomic and antigenomic RNA by recognizing replications specific signals. The early replication complex formed by the polyprotein P123 and nsP4 synthesizes minus-strand RNAs (By similarity). The late replication complex composed of fully processed nsP1-nsP4 is responsible for the production of genomic and subgenomic plus-strand RNAs (By similarity).</text>
</comment>
<comment type="catalytic activity">
    <reaction evidence="4">
        <text>GTP + S-adenosyl-L-methionine = N(7)-methyl-GTP + S-adenosyl-L-homocysteine</text>
        <dbReference type="Rhea" id="RHEA:46948"/>
        <dbReference type="ChEBI" id="CHEBI:37565"/>
        <dbReference type="ChEBI" id="CHEBI:57856"/>
        <dbReference type="ChEBI" id="CHEBI:59789"/>
        <dbReference type="ChEBI" id="CHEBI:87133"/>
    </reaction>
</comment>
<comment type="catalytic activity">
    <reaction evidence="4">
        <text>N(7)-methyl-GTP + L-histidyl-[protein] = N(tele)-(N(7)-methylguanosine 5'-phospho)-L-histidyl-[protein] + diphosphate</text>
        <dbReference type="Rhea" id="RHEA:54792"/>
        <dbReference type="Rhea" id="RHEA-COMP:9745"/>
        <dbReference type="Rhea" id="RHEA-COMP:13995"/>
        <dbReference type="ChEBI" id="CHEBI:29979"/>
        <dbReference type="ChEBI" id="CHEBI:33019"/>
        <dbReference type="ChEBI" id="CHEBI:87133"/>
        <dbReference type="ChEBI" id="CHEBI:138334"/>
    </reaction>
    <physiologicalReaction direction="left-to-right" evidence="4">
        <dbReference type="Rhea" id="RHEA:54793"/>
    </physiologicalReaction>
</comment>
<comment type="catalytic activity">
    <reaction evidence="4">
        <text>N(tele)-(N(7)-methylguanosine 5'-phospho)-L-histidyl-[protein] + a 5'-end diphospho-(purine-ribonucleoside) in mRNA + H(+) = a 5'-end (N(7)-methyl 5'-triphosphoguanosine)-(purine-ribonucleoside) in mRNA + L-histidyl-[protein]</text>
        <dbReference type="Rhea" id="RHEA:54800"/>
        <dbReference type="Rhea" id="RHEA-COMP:9745"/>
        <dbReference type="Rhea" id="RHEA-COMP:12925"/>
        <dbReference type="Rhea" id="RHEA-COMP:13929"/>
        <dbReference type="Rhea" id="RHEA-COMP:13995"/>
        <dbReference type="ChEBI" id="CHEBI:15378"/>
        <dbReference type="ChEBI" id="CHEBI:29979"/>
        <dbReference type="ChEBI" id="CHEBI:133968"/>
        <dbReference type="ChEBI" id="CHEBI:138276"/>
        <dbReference type="ChEBI" id="CHEBI:138334"/>
    </reaction>
</comment>
<comment type="catalytic activity">
    <reaction evidence="3">
        <text>a 5'-end triphospho-ribonucleoside in mRNA + H2O = a 5'-end diphospho-ribonucleoside in mRNA + phosphate + H(+)</text>
        <dbReference type="Rhea" id="RHEA:67004"/>
        <dbReference type="Rhea" id="RHEA-COMP:17164"/>
        <dbReference type="Rhea" id="RHEA-COMP:17165"/>
        <dbReference type="ChEBI" id="CHEBI:15377"/>
        <dbReference type="ChEBI" id="CHEBI:15378"/>
        <dbReference type="ChEBI" id="CHEBI:43474"/>
        <dbReference type="ChEBI" id="CHEBI:167616"/>
        <dbReference type="ChEBI" id="CHEBI:167618"/>
        <dbReference type="EC" id="3.6.1.74"/>
    </reaction>
    <physiologicalReaction direction="left-to-right" evidence="3">
        <dbReference type="Rhea" id="RHEA:67005"/>
    </physiologicalReaction>
</comment>
<comment type="catalytic activity">
    <reaction evidence="6">
        <text>a ribonucleoside 5'-triphosphate + H2O = a ribonucleoside 5'-diphosphate + phosphate + H(+)</text>
        <dbReference type="Rhea" id="RHEA:23680"/>
        <dbReference type="ChEBI" id="CHEBI:15377"/>
        <dbReference type="ChEBI" id="CHEBI:15378"/>
        <dbReference type="ChEBI" id="CHEBI:43474"/>
        <dbReference type="ChEBI" id="CHEBI:57930"/>
        <dbReference type="ChEBI" id="CHEBI:61557"/>
        <dbReference type="EC" id="3.6.1.15"/>
    </reaction>
</comment>
<comment type="catalytic activity">
    <reaction evidence="6">
        <text>ATP + H2O = ADP + phosphate + H(+)</text>
        <dbReference type="Rhea" id="RHEA:13065"/>
        <dbReference type="ChEBI" id="CHEBI:15377"/>
        <dbReference type="ChEBI" id="CHEBI:15378"/>
        <dbReference type="ChEBI" id="CHEBI:30616"/>
        <dbReference type="ChEBI" id="CHEBI:43474"/>
        <dbReference type="ChEBI" id="CHEBI:456216"/>
        <dbReference type="EC" id="3.6.4.13"/>
    </reaction>
</comment>
<comment type="catalytic activity">
    <reaction evidence="8">
        <text>RNA(n) + a ribonucleoside 5'-triphosphate = RNA(n+1) + diphosphate</text>
        <dbReference type="Rhea" id="RHEA:21248"/>
        <dbReference type="Rhea" id="RHEA-COMP:14527"/>
        <dbReference type="Rhea" id="RHEA-COMP:17342"/>
        <dbReference type="ChEBI" id="CHEBI:33019"/>
        <dbReference type="ChEBI" id="CHEBI:61557"/>
        <dbReference type="ChEBI" id="CHEBI:140395"/>
        <dbReference type="EC" id="2.7.7.48"/>
    </reaction>
</comment>
<comment type="catalytic activity">
    <reaction evidence="4">
        <text>4-O-(ADP-D-ribosyl)-L-aspartyl-[protein] + H2O = L-aspartyl-[protein] + ADP-D-ribose + H(+)</text>
        <dbReference type="Rhea" id="RHEA:54428"/>
        <dbReference type="Rhea" id="RHEA-COMP:9867"/>
        <dbReference type="Rhea" id="RHEA-COMP:13832"/>
        <dbReference type="ChEBI" id="CHEBI:15377"/>
        <dbReference type="ChEBI" id="CHEBI:15378"/>
        <dbReference type="ChEBI" id="CHEBI:29961"/>
        <dbReference type="ChEBI" id="CHEBI:57967"/>
        <dbReference type="ChEBI" id="CHEBI:138102"/>
    </reaction>
    <physiologicalReaction direction="left-to-right" evidence="4">
        <dbReference type="Rhea" id="RHEA:54429"/>
    </physiologicalReaction>
</comment>
<comment type="catalytic activity">
    <reaction evidence="4">
        <text>5-O-(ADP-D-ribosyl)-L-glutamyl-[protein] + H2O = L-glutamyl-[protein] + ADP-D-ribose + H(+)</text>
        <dbReference type="Rhea" id="RHEA:58248"/>
        <dbReference type="Rhea" id="RHEA-COMP:10208"/>
        <dbReference type="Rhea" id="RHEA-COMP:15089"/>
        <dbReference type="ChEBI" id="CHEBI:15377"/>
        <dbReference type="ChEBI" id="CHEBI:15378"/>
        <dbReference type="ChEBI" id="CHEBI:29973"/>
        <dbReference type="ChEBI" id="CHEBI:57967"/>
        <dbReference type="ChEBI" id="CHEBI:142540"/>
    </reaction>
    <physiologicalReaction direction="left-to-right" evidence="4">
        <dbReference type="Rhea" id="RHEA:58249"/>
    </physiologicalReaction>
</comment>
<comment type="catalytic activity">
    <reaction evidence="2">
        <text>RNA(n) + ATP = RNA(n)-3'-adenine ribonucleotide + diphosphate</text>
        <dbReference type="Rhea" id="RHEA:11332"/>
        <dbReference type="Rhea" id="RHEA-COMP:14527"/>
        <dbReference type="Rhea" id="RHEA-COMP:17347"/>
        <dbReference type="ChEBI" id="CHEBI:30616"/>
        <dbReference type="ChEBI" id="CHEBI:33019"/>
        <dbReference type="ChEBI" id="CHEBI:140395"/>
        <dbReference type="ChEBI" id="CHEBI:173115"/>
        <dbReference type="EC" id="2.7.7.19"/>
    </reaction>
</comment>
<comment type="catalytic activity">
    <reaction evidence="5">
        <text>ADP-alpha-D-ribose 1''-phosphate + H2O = ADP-D-ribose + phosphate</text>
        <dbReference type="Rhea" id="RHEA:25029"/>
        <dbReference type="ChEBI" id="CHEBI:15377"/>
        <dbReference type="ChEBI" id="CHEBI:43474"/>
        <dbReference type="ChEBI" id="CHEBI:57967"/>
        <dbReference type="ChEBI" id="CHEBI:58753"/>
        <dbReference type="EC" id="3.1.3.84"/>
    </reaction>
    <physiologicalReaction direction="left-to-right" evidence="5">
        <dbReference type="Rhea" id="RHEA:25030"/>
    </physiologicalReaction>
</comment>
<comment type="cofactor">
    <cofactor evidence="2">
        <name>Mg(2+)</name>
        <dbReference type="ChEBI" id="CHEBI:18420"/>
    </cofactor>
    <cofactor evidence="2">
        <name>Mn(2+)</name>
        <dbReference type="ChEBI" id="CHEBI:29035"/>
    </cofactor>
    <text evidence="2">For nsP4 adenylyltransferase activity; Mn(2+) supports catalysis at 60% of the levels observed with Mg(2+).</text>
</comment>
<comment type="cofactor">
    <cofactor evidence="2">
        <name>Mg(2+)</name>
        <dbReference type="ChEBI" id="CHEBI:18420"/>
    </cofactor>
    <text evidence="2">For nsP4 RNA-directed RNA polymerase activity.</text>
</comment>
<comment type="cofactor">
    <cofactor evidence="4">
        <name>Mg(2+)</name>
        <dbReference type="ChEBI" id="CHEBI:18420"/>
    </cofactor>
    <text evidence="4">For nsP1 guanylylation.</text>
</comment>
<comment type="cofactor">
    <cofactor>
        <name>Mg(2+)</name>
        <dbReference type="ChEBI" id="CHEBI:18420"/>
    </cofactor>
    <text evidence="6">For nsP2 RNA triphosphatase activity.</text>
</comment>
<comment type="cofactor">
    <cofactor>
        <name>Mg(2+)</name>
        <dbReference type="ChEBI" id="CHEBI:18420"/>
    </cofactor>
    <text evidence="6">For nsP2 NTPase activity.</text>
</comment>
<comment type="activity regulation">
    <molecule>mRNA-capping enzyme nsP1</molecule>
    <text evidence="4">Inhibited by sinefungin.</text>
</comment>
<comment type="subunit">
    <molecule>mRNA-capping enzyme nsP1</molecule>
    <text evidence="4 6">Interacts with non-structural protein 3 (By similarity). Interacts with RNA-directed RNA polymerase nsP4 (By similarity). Interacts with protease nsP2 (By similarity). interacts with itself (By similarity).</text>
</comment>
<comment type="subunit">
    <molecule>Non-structural protein 3</molecule>
    <text evidence="4 6 13">Interacts with mRNA-capping enzyme nsP1 (By similarity). Interacts with host DDX1 (By similarity). Interacts with host DDX3 (By similarity). Interacts (via C-terminus) with host FXR1; this interaction inhibits the formation of host stress granules on viral mRNAs and the nsp3-FXR1 complexes bind viral RNAs and probably orchestrate the assembly of viral replication complexes (PubMed:28468889). Interacts (via C-terminus) with host FXR2; this interaction inhibits the formation of host stress granules on viral mRNAs and the nsp3-FXR2 complexes bind viral RNAs and probably orchestrate the assembly of viral replication complexes (PubMed:28468889). Interacts (via C-terminus) with host FMR1; this interaction inhibits the formation of host stress granules on viral mRNAs and the nsp3-FMR1 complexes bind viral RNAs and probably orchestrate the assembly of viral replication complexes (PubMed:28468889). Interacts (via C-terminus) with host G3BP1; this interaction inhibits the formation of host stress granules on viral mRNAs and the nsp3-G3BP1 complexes bind viral RNAs and probably orchestrate the assembly of viral replication complexes (PubMed:28468889). Interacts (via C-terminus) with host G3BP2; this interaction inhibits the formation of host stress granules on viral mRNAs and the nsp3-G3BP2 complexes bind viral RNAs and probably orchestrate the assembly of viral replication complexes (PubMed:28468889).</text>
</comment>
<comment type="subunit">
    <molecule>RNA-directed RNA polymerase nsP4</molecule>
    <text evidence="4 6">Interacts with mRNA-capping enzyme nsP1 (By similarity). Interacts with protease nsP2 (By similarity). interacts with itself (By similarity).</text>
</comment>
<comment type="subunit">
    <molecule>Protease nsP2</molecule>
    <text evidence="4 6">Interacts with RNA-directed RNA polymerase nsP4 (By similarity). Interacts with mRNA-capping enzyme nsP1 (By similarity). Interacts with KPNA1/karyopherin-alpha1; this interaction probably allows the active transport of protease nsP2 into the host nucleus (By similarity).</text>
</comment>
<comment type="subcellular location">
    <molecule>Polyprotein P1234</molecule>
    <subcellularLocation>
        <location evidence="14">Host cytoplasmic vesicle membrane</location>
        <topology evidence="14">Peripheral membrane protein</topology>
    </subcellularLocation>
    <text evidence="14">Part of cytoplasmic vesicles, which are probably formed at the plasma membrane and internalized leading to late endosomal/lysosomal spherules containing the replication complex.</text>
</comment>
<comment type="subcellular location">
    <molecule>Polyprotein P123'</molecule>
    <subcellularLocation>
        <location evidence="14">Host cytoplasmic vesicle membrane</location>
        <topology evidence="14">Peripheral membrane protein</topology>
    </subcellularLocation>
    <text evidence="14">Part of cytoplasmic vesicles, which are probably formed at the plasma membrane and internalized leading to late endosomal/lysosomal spherules containing the replication complex.</text>
</comment>
<comment type="subcellular location">
    <molecule>Polyprotein P123</molecule>
    <subcellularLocation>
        <location evidence="14">Host cytoplasmic vesicle membrane</location>
        <topology evidence="14">Peripheral membrane protein</topology>
    </subcellularLocation>
    <text evidence="14">Part of cytoplasmic vesicles, which are probably formed at the plasma membrane and internalized leading to late endosomal/lysosomal spherules containing the replication complex.</text>
</comment>
<comment type="subcellular location">
    <molecule>mRNA-capping enzyme nsP1</molecule>
    <subcellularLocation>
        <location evidence="3">Host cytoplasmic vesicle membrane</location>
        <topology evidence="3">Lipid-anchor</topology>
    </subcellularLocation>
    <subcellularLocation>
        <location evidence="3">Host cell membrane</location>
        <topology evidence="3">Lipid-anchor</topology>
        <orientation evidence="3">Cytoplasmic side</orientation>
    </subcellularLocation>
    <subcellularLocation>
        <location evidence="3">Host cell projection</location>
        <location evidence="3">Host filopodium</location>
    </subcellularLocation>
    <text evidence="3">In the late phase of infection, the polyprotein is quickly cleaved before localization to cellular membranes. Then a fraction of nsP1 localizes to the inner surface of the plasma membrane and its filopodial extensions. Only the palmitoylated nsP1 localizes to the host filopodia (By similarity). NsP1 is also part of cytoplasmic vesicles, which are probably formed at the plasma membrane and internalized leading to late endosomal/lysosomal spherules containing the replication complex (By similarity).</text>
</comment>
<comment type="subcellular location">
    <molecule>Protease nsP2</molecule>
    <subcellularLocation>
        <location evidence="3">Host cytoplasmic vesicle membrane</location>
        <topology evidence="3">Peripheral membrane protein</topology>
    </subcellularLocation>
    <subcellularLocation>
        <location evidence="4">Host nucleus</location>
    </subcellularLocation>
    <subcellularLocation>
        <location evidence="4">Host cytoplasm</location>
    </subcellularLocation>
    <text evidence="3 4">In the late phase of infection, the polyprotein is quickly cleaved before localization to cellular membranes. Then approximately half of nsP2 is found in the nucleus (By similarity). Shuttles between cytoplasm and nucleus (By similarity). NsP2 is also part of cytoplasmic vesicles, which are probably formed at the plasma membrane and internalized leading to late endosomal/lysosomal spherules containing the replication complex (By similarity).</text>
</comment>
<comment type="subcellular location">
    <molecule>Non-structural protein 3</molecule>
    <subcellularLocation>
        <location evidence="2">Host cytoplasmic vesicle membrane</location>
        <topology evidence="14">Peripheral membrane protein</topology>
    </subcellularLocation>
    <text evidence="2">In the late phase of infection, the polyprotein is quickly cleaved before localization to cellular membranes. Then nsP3 and nsP3' form aggregates in cytoplasm (By similarity). NsP3 is also part of cytoplasmic vesicles, which are probably formed at the plasma membrane and internalized leading to late endosomal/lysosomal spherules containing the replication complex (By similarity).</text>
</comment>
<comment type="subcellular location">
    <molecule>Non-structural protein 3'</molecule>
    <subcellularLocation>
        <location evidence="14">Host cytoplasmic vesicle membrane</location>
        <topology evidence="14">Peripheral membrane protein</topology>
    </subcellularLocation>
    <text evidence="2 14">In the late phase of infection, the polyprotein is quickly cleaved before localization to cellular membranes. Then nsP3 and nsP3' form aggregates in cytoplasm (By similarity). NsP3' is also part of cytoplasmic vesicles, which are probably formed at the plasma membrane and internalized leading to late endosomal/lysosomal spherules containing the replication complex (Probable).</text>
</comment>
<comment type="subcellular location">
    <molecule>RNA-directed RNA polymerase nsP4</molecule>
    <subcellularLocation>
        <location>Host cytoplasmic vesicle membrane</location>
        <topology evidence="3">Peripheral membrane protein</topology>
    </subcellularLocation>
    <text evidence="3">NsP4 is part of cytoplasmic vesicles, which are probably formed at the plasma membrane and internalized leading to late endosomal/lysosomal spherules containing the replication complex.</text>
</comment>
<comment type="domain">
    <molecule>Protease nsP2</molecule>
    <text evidence="4 6">The N-terminus exhibits NTPase and RNA triphosphatase activities and is proposed to have helicase activity, whereas the C-terminus possesses protease activity (By similarity). Contains a nuclear localization signal and a nuclear export signal, these two motifs are probably involved in the shuttling between the cytoplasm and the nucleus of nsP2 (By similarity).</text>
</comment>
<comment type="domain">
    <molecule>Non-structural protein 3</molecule>
    <text evidence="2 4 13">In the N-terminus, the macro domain displays a mono-ADP-ribosylhydrolase activity (By similarity). The central part has a zinc-binding function (By similarity). The C-terminus contains two regions responsible for the formation of the nsP3/FXR and nsp3/G3BP complexes (PubMed:28468889).</text>
</comment>
<comment type="domain">
    <molecule>Non-structural protein 3'</molecule>
    <text evidence="2 4 13">In the N-terminus, the macro domain displays a mono-ADP-ribosylhydrolase activity (By similarity). The central part has a zinc-binding function (By similarity). The C-terminus contains two regions responsible for the formation of the nsP3'/FXR and nsp3'/G3BP complexes (PubMed:28468889).</text>
</comment>
<comment type="PTM">
    <molecule>Polyprotein P1234</molecule>
    <text evidence="2">Specific enzymatic cleavages in vivo yield mature proteins (By similarity). The processing of the polyprotein is temporally regulated (By similarity). In early stages (1.7 hpi), P1234 is first cleaved in trans through its nsP2 protease activity, releasing P123' and nsP4, which associate to form the early replication complex (By similarity). At the same time, P1234 is also cut at the nsP1/nsP2 site early in infection but with lower efficiency (By similarity). After replication of the viral minus-strand RNAs (4 hpi), the polyproteins are cut at the nsP1/nsP2 and nsP2/nsP3 sites very efficiently, preventing accumulation of P123' and P1234 and allowing the formation of the late replication complex (By similarity). NsP3'/nsP4 site is not cleaved anymore and P34 is produced rather than nsP4 (By similarity).</text>
</comment>
<comment type="PTM">
    <molecule>Polyprotein P123</molecule>
    <text evidence="2">Specific enzymatic cleavages in vivo yield mature proteins (By similarity). The processing of the polyprotein is temporally regulated (By similarity). In early stages (1.7 hpi), P123 is cleaved at the nsP1/nsP2 site with low efficiency (By similarity). After replication of the viral minus-strand RNAs (4 hpi), the polyproteins are cut at the nsP1/nsP2 and nsP2/nsP3 sites very efficiently, preventing accumulation of P123 and allowing the formation of the late replication complex (By similarity).</text>
</comment>
<comment type="PTM">
    <molecule>Polyprotein P123'</molecule>
    <text evidence="2">Specific enzymatic cleavages in vivo yield mature proteins (By similarity). The processing of the polyprotein is temporally regulated (By similarity). In early stages (1.7 hpi), P123' is cleaved at the nsP1/nsP2 site with low efficiency (By similarity). After replication of the viral minus-strand RNAs (4 hpi), the polyproteins are cut at the nsP1/nsP2 and nsP2/nsP3 sites very efficiently, preventing accumulation of P123' and allowing the formation of the late replication complex (By similarity).</text>
</comment>
<comment type="PTM">
    <molecule>mRNA-capping enzyme nsP1</molecule>
    <text evidence="2">Palmitoylated by host palmitoyltransferases ZDHHC2 and ZDHHC19.</text>
</comment>
<comment type="PTM">
    <molecule>Non-structural protein 3</molecule>
    <text evidence="3">Phosphorylated by host on serines and threonines.</text>
</comment>
<comment type="PTM">
    <molecule>Non-structural protein 3'</molecule>
    <text evidence="3">Phosphorylated by host on serines and threonines.</text>
</comment>
<comment type="PTM">
    <molecule>RNA-directed RNA polymerase nsP4</molecule>
    <text evidence="2">Ubiquitinated; targets the protein for rapid degradation via the ubiquitin system (By similarity). Nsp4 is present in extremely low quantities due to low frequency of translation through the amber stop-codon and the degradation by the ubiquitin pathway (By similarity).</text>
</comment>
<comment type="miscellaneous">
    <text evidence="2">Viral replication produces dsRNA in the late phase of infection, resulting in a strong activation of host EIF2AK2/PKR, leading to almost complete phosphorylation of EIF2A (By similarity). This inactivates completely cellular translation initiation, resulting shutoff of host proteins synthesis (By similarity). However, phosphorylation of EIF2A is probably not the only mechanism responsible for the host translation shutoff (By similarity). The viral translation can still occur normally because it relies on a hairpin structure in the coding region of sgRNA and is EIF2A-, EIF2D-, EIF4G- EIF4A-independent (By similarity).</text>
</comment>
<comment type="miscellaneous">
    <text evidence="1 2">The genome codes for P123, but readthrough of a terminator codon UGA occurs between the codons for Asn-1879 and Arg-1881 giving rise to P1234. P1234 is cleaved quickly by nsP2 into P123' and nsP4 (By similarity). Further processing of p123' gives nsP1, nsP2 and nsP3' which is 6 amino acids longer than nsP3 since the cleavage site is after the readthrough (By similarity). This unusual molecular mechanism ensures that few nsP4 are produced compared to other non-structural proteins (By similarity). Mutant viruses with no alternative termination site grow significantly slower than wild-type virus (By similarity). The opal termination codon is frequently mutated to a sense codon on passage in cell culture (By similarity). The presence of the opal codon may be a requirement for viral maintenance in both vertebrate and invertebrate hosts and a selective advantage may be conferred in cell culture for the sense codon (By similarity).</text>
</comment>
<proteinExistence type="evidence at protein level"/>